<sequence length="664" mass="72878">MEPLYQYAWLIPVLPLLGAMVIGIGLISLNKFTNKLRQLNAVFVLSLIGTSMALSFGLLWSQIQGHEAFTYTLEWAAAGDFHLQMGYTVDHLSALMSVIVTTVALLVMIYTDGYMAHDPGYVRFYAYLSIFSSSMLGLVFSPNLVQVYIFWELVGMCSYLLIGFWYDRKAAADACQKAFVTNRVGDFGLLLGMLGLYWATGSFEFDLMGDRLMDLVSTGQISSLLAIVFAVLVFLGPVAKSAQFPLHVWLPDAMEGPTPISALIHAATMVAAGVFLVARMYPVFEPIPEAMNVIAWTGATTAFLGATIALTQNDIKKGLAYSTMSQLGYMVMAMGIGGYTAGLFHLMTHAYFKAMLFLGSGSVIHGMEEVVGHNAVLAQDMRLMGGLRKYMPITATTFLIGTLAICGIPPFAGFWSKDEILGLAFEANPVLWFIGWATAGMTAFYMFRMYFLTFEGEFRGTDQQLQEKLLTAAGQAPEEGHHGSKPHESPLTMTFPLMALAVPSVLIGLLGVPWGNRFEAFVFSPNEAAEAAEHGFELTEFLIMGGNSVGIALIGITIASLMYLQQRIDPARLAEKFPVLYQLSLNKWYFDDIYNNVFVMGTRRLARQILEVDYRVVDGAVNLTGIATLLSGEGLKYIENGRVQFYALIVFGAVLGFVIFFSVA</sequence>
<comment type="function">
    <text evidence="1">NDH-1 shuttles electrons from NAD(P)H, via FMN and iron-sulfur (Fe-S) centers, to quinones in the respiratory chain. The immediate electron acceptor for the enzyme in this species is believed to be plastoquinone. Couples the redox reaction to proton translocation (for every two electrons transferred, four hydrogen ions are translocated across the cytoplasmic membrane), and thus conserves the redox energy in a proton gradient (By similarity).</text>
</comment>
<comment type="catalytic activity">
    <reaction>
        <text>a plastoquinone + NADH + (n+1) H(+)(in) = a plastoquinol + NAD(+) + n H(+)(out)</text>
        <dbReference type="Rhea" id="RHEA:42608"/>
        <dbReference type="Rhea" id="RHEA-COMP:9561"/>
        <dbReference type="Rhea" id="RHEA-COMP:9562"/>
        <dbReference type="ChEBI" id="CHEBI:15378"/>
        <dbReference type="ChEBI" id="CHEBI:17757"/>
        <dbReference type="ChEBI" id="CHEBI:57540"/>
        <dbReference type="ChEBI" id="CHEBI:57945"/>
        <dbReference type="ChEBI" id="CHEBI:62192"/>
    </reaction>
</comment>
<comment type="catalytic activity">
    <reaction>
        <text>a plastoquinone + NADPH + (n+1) H(+)(in) = a plastoquinol + NADP(+) + n H(+)(out)</text>
        <dbReference type="Rhea" id="RHEA:42612"/>
        <dbReference type="Rhea" id="RHEA-COMP:9561"/>
        <dbReference type="Rhea" id="RHEA-COMP:9562"/>
        <dbReference type="ChEBI" id="CHEBI:15378"/>
        <dbReference type="ChEBI" id="CHEBI:17757"/>
        <dbReference type="ChEBI" id="CHEBI:57783"/>
        <dbReference type="ChEBI" id="CHEBI:58349"/>
        <dbReference type="ChEBI" id="CHEBI:62192"/>
    </reaction>
</comment>
<comment type="subcellular location">
    <subcellularLocation>
        <location>Cell membrane</location>
        <topology>Multi-pass membrane protein</topology>
    </subcellularLocation>
</comment>
<comment type="similarity">
    <text evidence="3">Belongs to the complex I subunit 5 family.</text>
</comment>
<protein>
    <recommendedName>
        <fullName>NAD(P)H-quinone oxidoreductase chain 5</fullName>
        <ecNumber>7.1.1.-</ecNumber>
    </recommendedName>
    <alternativeName>
        <fullName>NAD(P)H dehydrogenase I, chain 5</fullName>
    </alternativeName>
    <alternativeName>
        <fullName>NDH-1, chain 5</fullName>
    </alternativeName>
</protein>
<reference key="1">
    <citation type="journal article" date="1993" name="J. Bacteriol.">
        <title>Isolation and characterization of the ndhF gene of Synechococcus sp. strain PCC 7002 and initial characterization of an interposon mutant.</title>
        <authorList>
            <person name="Schluchter W.M."/>
            <person name="Zhao J."/>
            <person name="Bryant D.A."/>
        </authorList>
    </citation>
    <scope>NUCLEOTIDE SEQUENCE [GENOMIC DNA]</scope>
</reference>
<reference key="2">
    <citation type="submission" date="2008-02" db="EMBL/GenBank/DDBJ databases">
        <title>Complete sequence of Synechococcus sp. PCC 7002.</title>
        <authorList>
            <person name="Li T."/>
            <person name="Zhao J."/>
            <person name="Zhao C."/>
            <person name="Liu Z."/>
            <person name="Zhao F."/>
            <person name="Marquardt J."/>
            <person name="Nomura C.T."/>
            <person name="Persson S."/>
            <person name="Detter J.C."/>
            <person name="Richardson P.M."/>
            <person name="Lanz C."/>
            <person name="Schuster S.C."/>
            <person name="Wang J."/>
            <person name="Li S."/>
            <person name="Huang X."/>
            <person name="Cai T."/>
            <person name="Yu Z."/>
            <person name="Luo J."/>
            <person name="Zhao J."/>
            <person name="Bryant D.A."/>
        </authorList>
    </citation>
    <scope>NUCLEOTIDE SEQUENCE [LARGE SCALE GENOMIC DNA]</scope>
    <source>
        <strain>ATCC 27264 / PCC 7002 / PR-6</strain>
    </source>
</reference>
<reference key="3">
    <citation type="journal article" date="1992" name="Biochemistry">
        <title>Molecular characterization of ferredoxin-NADP+ oxidoreductase in cyanobacteria: cloning and sequence of the petH gene of Synechococcus sp. PCC 7002 and studies on the gene product.</title>
        <authorList>
            <person name="Schluchter W.M."/>
            <person name="Bryant D.A."/>
        </authorList>
    </citation>
    <scope>NUCLEOTIDE SEQUENCE [GENOMIC DNA] OF 1-20</scope>
</reference>
<name>NU5C_PICP2</name>
<gene>
    <name type="primary">ndhF</name>
    <name type="ordered locus">SYNPCC7002_A0854</name>
</gene>
<feature type="chain" id="PRO_0000118209" description="NAD(P)H-quinone oxidoreductase chain 5">
    <location>
        <begin position="1"/>
        <end position="664"/>
    </location>
</feature>
<feature type="transmembrane region" description="Helical" evidence="2">
    <location>
        <begin position="7"/>
        <end position="27"/>
    </location>
</feature>
<feature type="transmembrane region" description="Helical" evidence="2">
    <location>
        <begin position="39"/>
        <end position="59"/>
    </location>
</feature>
<feature type="transmembrane region" description="Helical" evidence="2">
    <location>
        <begin position="91"/>
        <end position="111"/>
    </location>
</feature>
<feature type="transmembrane region" description="Helical" evidence="2">
    <location>
        <begin position="120"/>
        <end position="140"/>
    </location>
</feature>
<feature type="transmembrane region" description="Helical" evidence="2">
    <location>
        <begin position="144"/>
        <end position="164"/>
    </location>
</feature>
<feature type="transmembrane region" description="Helical" evidence="2">
    <location>
        <begin position="187"/>
        <end position="207"/>
    </location>
</feature>
<feature type="transmembrane region" description="Helical" evidence="2">
    <location>
        <begin position="219"/>
        <end position="239"/>
    </location>
</feature>
<feature type="transmembrane region" description="Helical" evidence="2">
    <location>
        <begin position="258"/>
        <end position="278"/>
    </location>
</feature>
<feature type="transmembrane region" description="Helical" evidence="2">
    <location>
        <begin position="290"/>
        <end position="310"/>
    </location>
</feature>
<feature type="transmembrane region" description="Helical" evidence="2">
    <location>
        <begin position="327"/>
        <end position="347"/>
    </location>
</feature>
<feature type="transmembrane region" description="Helical" evidence="2">
    <location>
        <begin position="352"/>
        <end position="372"/>
    </location>
</feature>
<feature type="transmembrane region" description="Helical" evidence="2">
    <location>
        <begin position="395"/>
        <end position="415"/>
    </location>
</feature>
<feature type="transmembrane region" description="Helical" evidence="2">
    <location>
        <begin position="420"/>
        <end position="440"/>
    </location>
</feature>
<feature type="transmembrane region" description="Helical" evidence="2">
    <location>
        <begin position="495"/>
        <end position="515"/>
    </location>
</feature>
<feature type="transmembrane region" description="Helical" evidence="2">
    <location>
        <begin position="541"/>
        <end position="561"/>
    </location>
</feature>
<feature type="transmembrane region" description="Helical" evidence="2">
    <location>
        <begin position="643"/>
        <end position="663"/>
    </location>
</feature>
<feature type="sequence conflict" description="In Ref. 1; AAA27311." evidence="3" ref="1">
    <original>N</original>
    <variation>Y</variation>
    <location>
        <position position="40"/>
    </location>
</feature>
<proteinExistence type="inferred from homology"/>
<evidence type="ECO:0000250" key="1"/>
<evidence type="ECO:0000255" key="2"/>
<evidence type="ECO:0000305" key="3"/>
<accession>P31971</accession>
<accession>B1XII7</accession>
<organism>
    <name type="scientific">Picosynechococcus sp. (strain ATCC 27264 / PCC 7002 / PR-6)</name>
    <name type="common">Agmenellum quadruplicatum</name>
    <dbReference type="NCBI Taxonomy" id="32049"/>
    <lineage>
        <taxon>Bacteria</taxon>
        <taxon>Bacillati</taxon>
        <taxon>Cyanobacteriota</taxon>
        <taxon>Cyanophyceae</taxon>
        <taxon>Oscillatoriophycideae</taxon>
        <taxon>Chroococcales</taxon>
        <taxon>Geminocystaceae</taxon>
        <taxon>Picosynechococcus</taxon>
    </lineage>
</organism>
<keyword id="KW-1003">Cell membrane</keyword>
<keyword id="KW-0472">Membrane</keyword>
<keyword id="KW-0520">NAD</keyword>
<keyword id="KW-0521">NADP</keyword>
<keyword id="KW-0618">Plastoquinone</keyword>
<keyword id="KW-0874">Quinone</keyword>
<keyword id="KW-1185">Reference proteome</keyword>
<keyword id="KW-1278">Translocase</keyword>
<keyword id="KW-0812">Transmembrane</keyword>
<keyword id="KW-1133">Transmembrane helix</keyword>
<dbReference type="EC" id="7.1.1.-"/>
<dbReference type="EMBL" id="M99378">
    <property type="protein sequence ID" value="AAA27311.1"/>
    <property type="molecule type" value="Genomic_DNA"/>
</dbReference>
<dbReference type="EMBL" id="CP000951">
    <property type="protein sequence ID" value="ACA98858.1"/>
    <property type="molecule type" value="Genomic_DNA"/>
</dbReference>
<dbReference type="EMBL" id="M86234">
    <property type="status" value="NOT_ANNOTATED_CDS"/>
    <property type="molecule type" value="Genomic_DNA"/>
</dbReference>
<dbReference type="RefSeq" id="WP_012306482.1">
    <property type="nucleotide sequence ID" value="NZ_JAHHPU010000001.1"/>
</dbReference>
<dbReference type="SMR" id="P31971"/>
<dbReference type="STRING" id="32049.SYNPCC7002_A0854"/>
<dbReference type="KEGG" id="syp:SYNPCC7002_A0854"/>
<dbReference type="eggNOG" id="COG1009">
    <property type="taxonomic scope" value="Bacteria"/>
</dbReference>
<dbReference type="HOGENOM" id="CLU_007100_6_0_3"/>
<dbReference type="Proteomes" id="UP000001688">
    <property type="component" value="Chromosome"/>
</dbReference>
<dbReference type="GO" id="GO:0005886">
    <property type="term" value="C:plasma membrane"/>
    <property type="evidence" value="ECO:0007669"/>
    <property type="project" value="UniProtKB-SubCell"/>
</dbReference>
<dbReference type="GO" id="GO:0008137">
    <property type="term" value="F:NADH dehydrogenase (ubiquinone) activity"/>
    <property type="evidence" value="ECO:0007669"/>
    <property type="project" value="InterPro"/>
</dbReference>
<dbReference type="GO" id="GO:0048038">
    <property type="term" value="F:quinone binding"/>
    <property type="evidence" value="ECO:0007669"/>
    <property type="project" value="UniProtKB-KW"/>
</dbReference>
<dbReference type="GO" id="GO:0042773">
    <property type="term" value="P:ATP synthesis coupled electron transport"/>
    <property type="evidence" value="ECO:0007669"/>
    <property type="project" value="InterPro"/>
</dbReference>
<dbReference type="GO" id="GO:0015990">
    <property type="term" value="P:electron transport coupled proton transport"/>
    <property type="evidence" value="ECO:0007669"/>
    <property type="project" value="TreeGrafter"/>
</dbReference>
<dbReference type="Gene3D" id="1.20.5.2700">
    <property type="match status" value="1"/>
</dbReference>
<dbReference type="InterPro" id="IPR002128">
    <property type="entry name" value="NADH_UbQ_OxRdtase_chlpt_su5_C"/>
</dbReference>
<dbReference type="InterPro" id="IPR018393">
    <property type="entry name" value="NADHpl_OxRdtase_5_subgr"/>
</dbReference>
<dbReference type="InterPro" id="IPR001750">
    <property type="entry name" value="ND/Mrp_TM"/>
</dbReference>
<dbReference type="InterPro" id="IPR003945">
    <property type="entry name" value="NU5C-like"/>
</dbReference>
<dbReference type="InterPro" id="IPR001516">
    <property type="entry name" value="Proton_antipo_N"/>
</dbReference>
<dbReference type="NCBIfam" id="TIGR01974">
    <property type="entry name" value="NDH_I_L"/>
    <property type="match status" value="1"/>
</dbReference>
<dbReference type="NCBIfam" id="NF005141">
    <property type="entry name" value="PRK06590.1"/>
    <property type="match status" value="1"/>
</dbReference>
<dbReference type="NCBIfam" id="NF005626">
    <property type="entry name" value="PRK07376.1"/>
    <property type="match status" value="1"/>
</dbReference>
<dbReference type="PANTHER" id="PTHR42829">
    <property type="entry name" value="NADH-UBIQUINONE OXIDOREDUCTASE CHAIN 5"/>
    <property type="match status" value="1"/>
</dbReference>
<dbReference type="PANTHER" id="PTHR42829:SF2">
    <property type="entry name" value="NADH-UBIQUINONE OXIDOREDUCTASE CHAIN 5"/>
    <property type="match status" value="1"/>
</dbReference>
<dbReference type="Pfam" id="PF01010">
    <property type="entry name" value="Proton_antipo_C"/>
    <property type="match status" value="1"/>
</dbReference>
<dbReference type="Pfam" id="PF00361">
    <property type="entry name" value="Proton_antipo_M"/>
    <property type="match status" value="1"/>
</dbReference>
<dbReference type="Pfam" id="PF00662">
    <property type="entry name" value="Proton_antipo_N"/>
    <property type="match status" value="1"/>
</dbReference>
<dbReference type="PRINTS" id="PR01434">
    <property type="entry name" value="NADHDHGNASE5"/>
</dbReference>
<dbReference type="PRINTS" id="PR01435">
    <property type="entry name" value="NPOXDRDTASE5"/>
</dbReference>